<gene>
    <name evidence="1" type="primary">ndk</name>
    <name type="ordered locus">RPR_02500</name>
</gene>
<feature type="chain" id="PRO_1000206221" description="Nucleoside diphosphate kinase">
    <location>
        <begin position="1"/>
        <end position="140"/>
    </location>
</feature>
<feature type="active site" description="Pros-phosphohistidine intermediate" evidence="1">
    <location>
        <position position="117"/>
    </location>
</feature>
<feature type="binding site" evidence="1">
    <location>
        <position position="11"/>
    </location>
    <ligand>
        <name>ATP</name>
        <dbReference type="ChEBI" id="CHEBI:30616"/>
    </ligand>
</feature>
<feature type="binding site" evidence="1">
    <location>
        <position position="59"/>
    </location>
    <ligand>
        <name>ATP</name>
        <dbReference type="ChEBI" id="CHEBI:30616"/>
    </ligand>
</feature>
<feature type="binding site" evidence="1">
    <location>
        <position position="87"/>
    </location>
    <ligand>
        <name>ATP</name>
        <dbReference type="ChEBI" id="CHEBI:30616"/>
    </ligand>
</feature>
<feature type="binding site" evidence="1">
    <location>
        <position position="93"/>
    </location>
    <ligand>
        <name>ATP</name>
        <dbReference type="ChEBI" id="CHEBI:30616"/>
    </ligand>
</feature>
<feature type="binding site" evidence="1">
    <location>
        <position position="104"/>
    </location>
    <ligand>
        <name>ATP</name>
        <dbReference type="ChEBI" id="CHEBI:30616"/>
    </ligand>
</feature>
<feature type="binding site" evidence="1">
    <location>
        <position position="114"/>
    </location>
    <ligand>
        <name>ATP</name>
        <dbReference type="ChEBI" id="CHEBI:30616"/>
    </ligand>
</feature>
<protein>
    <recommendedName>
        <fullName evidence="1">Nucleoside diphosphate kinase</fullName>
        <shortName evidence="1">NDK</shortName>
        <shortName evidence="1">NDP kinase</shortName>
        <ecNumber evidence="1">2.7.4.6</ecNumber>
    </recommendedName>
    <alternativeName>
        <fullName evidence="1">Nucleoside-2-P kinase</fullName>
    </alternativeName>
</protein>
<accession>C4K175</accession>
<evidence type="ECO:0000255" key="1">
    <source>
        <dbReference type="HAMAP-Rule" id="MF_00451"/>
    </source>
</evidence>
<proteinExistence type="inferred from homology"/>
<reference key="1">
    <citation type="journal article" date="2009" name="PLoS ONE">
        <title>Genome sequence of the endosymbiont Rickettsia peacockii and comparison with virulent Rickettsia rickettsii: identification of virulence factors.</title>
        <authorList>
            <person name="Felsheim R.F."/>
            <person name="Kurtti T.J."/>
            <person name="Munderloh U.G."/>
        </authorList>
    </citation>
    <scope>NUCLEOTIDE SEQUENCE [LARGE SCALE GENOMIC DNA]</scope>
    <source>
        <strain>Rustic</strain>
    </source>
</reference>
<keyword id="KW-0067">ATP-binding</keyword>
<keyword id="KW-0963">Cytoplasm</keyword>
<keyword id="KW-0418">Kinase</keyword>
<keyword id="KW-0460">Magnesium</keyword>
<keyword id="KW-0479">Metal-binding</keyword>
<keyword id="KW-0546">Nucleotide metabolism</keyword>
<keyword id="KW-0547">Nucleotide-binding</keyword>
<keyword id="KW-0597">Phosphoprotein</keyword>
<keyword id="KW-0808">Transferase</keyword>
<organism>
    <name type="scientific">Rickettsia peacockii (strain Rustic)</name>
    <dbReference type="NCBI Taxonomy" id="562019"/>
    <lineage>
        <taxon>Bacteria</taxon>
        <taxon>Pseudomonadati</taxon>
        <taxon>Pseudomonadota</taxon>
        <taxon>Alphaproteobacteria</taxon>
        <taxon>Rickettsiales</taxon>
        <taxon>Rickettsiaceae</taxon>
        <taxon>Rickettsieae</taxon>
        <taxon>Rickettsia</taxon>
        <taxon>spotted fever group</taxon>
    </lineage>
</organism>
<comment type="function">
    <text evidence="1">Major role in the synthesis of nucleoside triphosphates other than ATP. The ATP gamma phosphate is transferred to the NDP beta phosphate via a ping-pong mechanism, using a phosphorylated active-site intermediate.</text>
</comment>
<comment type="catalytic activity">
    <reaction evidence="1">
        <text>a 2'-deoxyribonucleoside 5'-diphosphate + ATP = a 2'-deoxyribonucleoside 5'-triphosphate + ADP</text>
        <dbReference type="Rhea" id="RHEA:44640"/>
        <dbReference type="ChEBI" id="CHEBI:30616"/>
        <dbReference type="ChEBI" id="CHEBI:61560"/>
        <dbReference type="ChEBI" id="CHEBI:73316"/>
        <dbReference type="ChEBI" id="CHEBI:456216"/>
        <dbReference type="EC" id="2.7.4.6"/>
    </reaction>
</comment>
<comment type="catalytic activity">
    <reaction evidence="1">
        <text>a ribonucleoside 5'-diphosphate + ATP = a ribonucleoside 5'-triphosphate + ADP</text>
        <dbReference type="Rhea" id="RHEA:18113"/>
        <dbReference type="ChEBI" id="CHEBI:30616"/>
        <dbReference type="ChEBI" id="CHEBI:57930"/>
        <dbReference type="ChEBI" id="CHEBI:61557"/>
        <dbReference type="ChEBI" id="CHEBI:456216"/>
        <dbReference type="EC" id="2.7.4.6"/>
    </reaction>
</comment>
<comment type="cofactor">
    <cofactor evidence="1">
        <name>Mg(2+)</name>
        <dbReference type="ChEBI" id="CHEBI:18420"/>
    </cofactor>
</comment>
<comment type="subunit">
    <text evidence="1">Homotetramer.</text>
</comment>
<comment type="subcellular location">
    <subcellularLocation>
        <location evidence="1">Cytoplasm</location>
    </subcellularLocation>
</comment>
<comment type="similarity">
    <text evidence="1">Belongs to the NDK family.</text>
</comment>
<sequence length="140" mass="15632">MTIQYTFSMIKPDAIKRNKIGQVNTYLENAGLKIVAQKMKFLTKYEAACFYDEHRARPFFNSLVEYITSGAVVLQVLKGEDAITLNRTVMGATNPAEAEAGTIRKDLGESIEANSIHGSDSENSAKREIAFFFNKSEIIE</sequence>
<dbReference type="EC" id="2.7.4.6" evidence="1"/>
<dbReference type="EMBL" id="CP001227">
    <property type="protein sequence ID" value="ACR47326.1"/>
    <property type="molecule type" value="Genomic_DNA"/>
</dbReference>
<dbReference type="RefSeq" id="WP_012736588.1">
    <property type="nucleotide sequence ID" value="NC_012730.1"/>
</dbReference>
<dbReference type="SMR" id="C4K175"/>
<dbReference type="KEGG" id="rpk:RPR_02500"/>
<dbReference type="HOGENOM" id="CLU_060216_8_1_5"/>
<dbReference type="Proteomes" id="UP000005015">
    <property type="component" value="Chromosome"/>
</dbReference>
<dbReference type="GO" id="GO:0005737">
    <property type="term" value="C:cytoplasm"/>
    <property type="evidence" value="ECO:0007669"/>
    <property type="project" value="UniProtKB-SubCell"/>
</dbReference>
<dbReference type="GO" id="GO:0005524">
    <property type="term" value="F:ATP binding"/>
    <property type="evidence" value="ECO:0007669"/>
    <property type="project" value="UniProtKB-UniRule"/>
</dbReference>
<dbReference type="GO" id="GO:0046872">
    <property type="term" value="F:metal ion binding"/>
    <property type="evidence" value="ECO:0007669"/>
    <property type="project" value="UniProtKB-KW"/>
</dbReference>
<dbReference type="GO" id="GO:0004550">
    <property type="term" value="F:nucleoside diphosphate kinase activity"/>
    <property type="evidence" value="ECO:0007669"/>
    <property type="project" value="UniProtKB-UniRule"/>
</dbReference>
<dbReference type="GO" id="GO:0006241">
    <property type="term" value="P:CTP biosynthetic process"/>
    <property type="evidence" value="ECO:0007669"/>
    <property type="project" value="UniProtKB-UniRule"/>
</dbReference>
<dbReference type="GO" id="GO:0006183">
    <property type="term" value="P:GTP biosynthetic process"/>
    <property type="evidence" value="ECO:0007669"/>
    <property type="project" value="UniProtKB-UniRule"/>
</dbReference>
<dbReference type="GO" id="GO:0006228">
    <property type="term" value="P:UTP biosynthetic process"/>
    <property type="evidence" value="ECO:0007669"/>
    <property type="project" value="UniProtKB-UniRule"/>
</dbReference>
<dbReference type="CDD" id="cd04413">
    <property type="entry name" value="NDPk_I"/>
    <property type="match status" value="1"/>
</dbReference>
<dbReference type="FunFam" id="3.30.70.141:FF:000003">
    <property type="entry name" value="Nucleoside diphosphate kinase"/>
    <property type="match status" value="1"/>
</dbReference>
<dbReference type="Gene3D" id="3.30.70.141">
    <property type="entry name" value="Nucleoside diphosphate kinase-like domain"/>
    <property type="match status" value="1"/>
</dbReference>
<dbReference type="HAMAP" id="MF_00451">
    <property type="entry name" value="NDP_kinase"/>
    <property type="match status" value="1"/>
</dbReference>
<dbReference type="InterPro" id="IPR034907">
    <property type="entry name" value="NDK-like_dom"/>
</dbReference>
<dbReference type="InterPro" id="IPR036850">
    <property type="entry name" value="NDK-like_dom_sf"/>
</dbReference>
<dbReference type="InterPro" id="IPR001564">
    <property type="entry name" value="Nucleoside_diP_kinase"/>
</dbReference>
<dbReference type="InterPro" id="IPR023005">
    <property type="entry name" value="Nucleoside_diP_kinase_AS"/>
</dbReference>
<dbReference type="NCBIfam" id="NF001908">
    <property type="entry name" value="PRK00668.1"/>
    <property type="match status" value="1"/>
</dbReference>
<dbReference type="PANTHER" id="PTHR46161">
    <property type="entry name" value="NUCLEOSIDE DIPHOSPHATE KINASE"/>
    <property type="match status" value="1"/>
</dbReference>
<dbReference type="PANTHER" id="PTHR46161:SF3">
    <property type="entry name" value="NUCLEOSIDE DIPHOSPHATE KINASE DDB_G0292928-RELATED"/>
    <property type="match status" value="1"/>
</dbReference>
<dbReference type="Pfam" id="PF00334">
    <property type="entry name" value="NDK"/>
    <property type="match status" value="1"/>
</dbReference>
<dbReference type="PRINTS" id="PR01243">
    <property type="entry name" value="NUCDPKINASE"/>
</dbReference>
<dbReference type="SMART" id="SM00562">
    <property type="entry name" value="NDK"/>
    <property type="match status" value="1"/>
</dbReference>
<dbReference type="SUPFAM" id="SSF54919">
    <property type="entry name" value="Nucleoside diphosphate kinase, NDK"/>
    <property type="match status" value="1"/>
</dbReference>
<dbReference type="PROSITE" id="PS00469">
    <property type="entry name" value="NDPK"/>
    <property type="match status" value="1"/>
</dbReference>
<dbReference type="PROSITE" id="PS51374">
    <property type="entry name" value="NDPK_LIKE"/>
    <property type="match status" value="1"/>
</dbReference>
<name>NDK_RICPU</name>